<keyword id="KW-0004">4Fe-4S</keyword>
<keyword id="KW-0963">Cytoplasm</keyword>
<keyword id="KW-0408">Iron</keyword>
<keyword id="KW-0411">Iron-sulfur</keyword>
<keyword id="KW-0479">Metal-binding</keyword>
<keyword id="KW-0949">S-adenosyl-L-methionine</keyword>
<keyword id="KW-0808">Transferase</keyword>
<keyword id="KW-0819">tRNA processing</keyword>
<comment type="function">
    <text evidence="1">Catalyzes the methylthiolation of N6-(dimethylallyl)adenosine (i(6)A), leading to the formation of 2-methylthio-N6-(dimethylallyl)adenosine (ms(2)i(6)A) at position 37 in tRNAs that read codons beginning with uridine.</text>
</comment>
<comment type="catalytic activity">
    <reaction evidence="1">
        <text>N(6)-dimethylallyladenosine(37) in tRNA + (sulfur carrier)-SH + AH2 + 2 S-adenosyl-L-methionine = 2-methylsulfanyl-N(6)-dimethylallyladenosine(37) in tRNA + (sulfur carrier)-H + 5'-deoxyadenosine + L-methionine + A + S-adenosyl-L-homocysteine + 2 H(+)</text>
        <dbReference type="Rhea" id="RHEA:37067"/>
        <dbReference type="Rhea" id="RHEA-COMP:10375"/>
        <dbReference type="Rhea" id="RHEA-COMP:10376"/>
        <dbReference type="Rhea" id="RHEA-COMP:14737"/>
        <dbReference type="Rhea" id="RHEA-COMP:14739"/>
        <dbReference type="ChEBI" id="CHEBI:13193"/>
        <dbReference type="ChEBI" id="CHEBI:15378"/>
        <dbReference type="ChEBI" id="CHEBI:17319"/>
        <dbReference type="ChEBI" id="CHEBI:17499"/>
        <dbReference type="ChEBI" id="CHEBI:29917"/>
        <dbReference type="ChEBI" id="CHEBI:57844"/>
        <dbReference type="ChEBI" id="CHEBI:57856"/>
        <dbReference type="ChEBI" id="CHEBI:59789"/>
        <dbReference type="ChEBI" id="CHEBI:64428"/>
        <dbReference type="ChEBI" id="CHEBI:74415"/>
        <dbReference type="ChEBI" id="CHEBI:74417"/>
        <dbReference type="EC" id="2.8.4.3"/>
    </reaction>
</comment>
<comment type="cofactor">
    <cofactor evidence="1">
        <name>[4Fe-4S] cluster</name>
        <dbReference type="ChEBI" id="CHEBI:49883"/>
    </cofactor>
    <text evidence="1">Binds 2 [4Fe-4S] clusters. One cluster is coordinated with 3 cysteines and an exchangeable S-adenosyl-L-methionine.</text>
</comment>
<comment type="subunit">
    <text evidence="1">Monomer.</text>
</comment>
<comment type="subcellular location">
    <subcellularLocation>
        <location evidence="1">Cytoplasm</location>
    </subcellularLocation>
</comment>
<comment type="similarity">
    <text evidence="1">Belongs to the methylthiotransferase family. MiaB subfamily.</text>
</comment>
<gene>
    <name evidence="1" type="primary">miaB</name>
    <name type="ordered locus">Paes_1999</name>
</gene>
<accession>B4S564</accession>
<name>MIAB_PROA2</name>
<reference key="1">
    <citation type="submission" date="2008-06" db="EMBL/GenBank/DDBJ databases">
        <title>Complete sequence of chromosome of Prosthecochloris aestuarii DSM 271.</title>
        <authorList>
            <consortium name="US DOE Joint Genome Institute"/>
            <person name="Lucas S."/>
            <person name="Copeland A."/>
            <person name="Lapidus A."/>
            <person name="Glavina del Rio T."/>
            <person name="Dalin E."/>
            <person name="Tice H."/>
            <person name="Bruce D."/>
            <person name="Goodwin L."/>
            <person name="Pitluck S."/>
            <person name="Schmutz J."/>
            <person name="Larimer F."/>
            <person name="Land M."/>
            <person name="Hauser L."/>
            <person name="Kyrpides N."/>
            <person name="Anderson I."/>
            <person name="Liu Z."/>
            <person name="Li T."/>
            <person name="Zhao F."/>
            <person name="Overmann J."/>
            <person name="Bryant D.A."/>
            <person name="Richardson P."/>
        </authorList>
    </citation>
    <scope>NUCLEOTIDE SEQUENCE [LARGE SCALE GENOMIC DNA]</scope>
    <source>
        <strain>DSM 271 / SK 413</strain>
    </source>
</reference>
<organism>
    <name type="scientific">Prosthecochloris aestuarii (strain DSM 271 / SK 413)</name>
    <dbReference type="NCBI Taxonomy" id="290512"/>
    <lineage>
        <taxon>Bacteria</taxon>
        <taxon>Pseudomonadati</taxon>
        <taxon>Chlorobiota</taxon>
        <taxon>Chlorobiia</taxon>
        <taxon>Chlorobiales</taxon>
        <taxon>Chlorobiaceae</taxon>
        <taxon>Prosthecochloris</taxon>
    </lineage>
</organism>
<feature type="chain" id="PRO_0000374456" description="tRNA-2-methylthio-N(6)-dimethylallyladenosine synthase">
    <location>
        <begin position="1"/>
        <end position="441"/>
    </location>
</feature>
<feature type="domain" description="MTTase N-terminal" evidence="1">
    <location>
        <begin position="3"/>
        <end position="119"/>
    </location>
</feature>
<feature type="domain" description="Radical SAM core" evidence="2">
    <location>
        <begin position="141"/>
        <end position="371"/>
    </location>
</feature>
<feature type="domain" description="TRAM" evidence="1">
    <location>
        <begin position="374"/>
        <end position="437"/>
    </location>
</feature>
<feature type="binding site" evidence="1">
    <location>
        <position position="12"/>
    </location>
    <ligand>
        <name>[4Fe-4S] cluster</name>
        <dbReference type="ChEBI" id="CHEBI:49883"/>
        <label>1</label>
    </ligand>
</feature>
<feature type="binding site" evidence="1">
    <location>
        <position position="48"/>
    </location>
    <ligand>
        <name>[4Fe-4S] cluster</name>
        <dbReference type="ChEBI" id="CHEBI:49883"/>
        <label>1</label>
    </ligand>
</feature>
<feature type="binding site" evidence="1">
    <location>
        <position position="82"/>
    </location>
    <ligand>
        <name>[4Fe-4S] cluster</name>
        <dbReference type="ChEBI" id="CHEBI:49883"/>
        <label>1</label>
    </ligand>
</feature>
<feature type="binding site" evidence="1">
    <location>
        <position position="155"/>
    </location>
    <ligand>
        <name>[4Fe-4S] cluster</name>
        <dbReference type="ChEBI" id="CHEBI:49883"/>
        <label>2</label>
        <note>4Fe-4S-S-AdoMet</note>
    </ligand>
</feature>
<feature type="binding site" evidence="1">
    <location>
        <position position="159"/>
    </location>
    <ligand>
        <name>[4Fe-4S] cluster</name>
        <dbReference type="ChEBI" id="CHEBI:49883"/>
        <label>2</label>
        <note>4Fe-4S-S-AdoMet</note>
    </ligand>
</feature>
<feature type="binding site" evidence="1">
    <location>
        <position position="162"/>
    </location>
    <ligand>
        <name>[4Fe-4S] cluster</name>
        <dbReference type="ChEBI" id="CHEBI:49883"/>
        <label>2</label>
        <note>4Fe-4S-S-AdoMet</note>
    </ligand>
</feature>
<sequence length="441" mass="49395">MTKKVSIRTFGCQMNQADTEIISSLLTAEGYCLVAEEDDADLVMLNTCAVRENAVEKIMHHLDSLKGLRRRRRGLVVGVIGCVPQYYREEMFQKSGVIDFIAGPDSYRKLPGLIRNAFQGIRGAELFLTQSETYGDIEPMRSGSISAFIPVMRGCNNMCAFCVVPFTRGRERSRSLQSVLDEVRRLEGQGYRELTLLGQNVNSYRDDEAGADFALLLDEVSKAAGEMRVRFTTSHPKDISEDLVNVVAQRENVCNAIHLPVQSGSSRMLEVMHRGHTRREYLDKIAMIRSAVPGVALSTDLIAGFCGETEEDHLQTLSLMEEVRFDYAYMFYYSVRPGTYAARHLTDDVALEEKKRRLQEIIDLQSGISGEIFGNDVGSVQEVLAESESRRSSDMLMGRSDTNRVVVFDRQHYQPGDLVRVVIESSTQATLIGRCQDPGEG</sequence>
<proteinExistence type="inferred from homology"/>
<protein>
    <recommendedName>
        <fullName evidence="1">tRNA-2-methylthio-N(6)-dimethylallyladenosine synthase</fullName>
        <ecNumber evidence="1">2.8.4.3</ecNumber>
    </recommendedName>
    <alternativeName>
        <fullName evidence="1">(Dimethylallyl)adenosine tRNA methylthiotransferase MiaB</fullName>
    </alternativeName>
    <alternativeName>
        <fullName evidence="1">tRNA-i(6)A37 methylthiotransferase</fullName>
    </alternativeName>
</protein>
<evidence type="ECO:0000255" key="1">
    <source>
        <dbReference type="HAMAP-Rule" id="MF_01864"/>
    </source>
</evidence>
<evidence type="ECO:0000255" key="2">
    <source>
        <dbReference type="PROSITE-ProRule" id="PRU01266"/>
    </source>
</evidence>
<dbReference type="EC" id="2.8.4.3" evidence="1"/>
<dbReference type="EMBL" id="CP001108">
    <property type="protein sequence ID" value="ACF47010.1"/>
    <property type="molecule type" value="Genomic_DNA"/>
</dbReference>
<dbReference type="RefSeq" id="WP_012506543.1">
    <property type="nucleotide sequence ID" value="NC_011059.1"/>
</dbReference>
<dbReference type="SMR" id="B4S564"/>
<dbReference type="STRING" id="290512.Paes_1999"/>
<dbReference type="KEGG" id="paa:Paes_1999"/>
<dbReference type="eggNOG" id="COG0621">
    <property type="taxonomic scope" value="Bacteria"/>
</dbReference>
<dbReference type="HOGENOM" id="CLU_018697_2_0_10"/>
<dbReference type="Proteomes" id="UP000002725">
    <property type="component" value="Chromosome"/>
</dbReference>
<dbReference type="GO" id="GO:0005829">
    <property type="term" value="C:cytosol"/>
    <property type="evidence" value="ECO:0007669"/>
    <property type="project" value="TreeGrafter"/>
</dbReference>
<dbReference type="GO" id="GO:0051539">
    <property type="term" value="F:4 iron, 4 sulfur cluster binding"/>
    <property type="evidence" value="ECO:0007669"/>
    <property type="project" value="UniProtKB-UniRule"/>
</dbReference>
<dbReference type="GO" id="GO:0046872">
    <property type="term" value="F:metal ion binding"/>
    <property type="evidence" value="ECO:0007669"/>
    <property type="project" value="UniProtKB-KW"/>
</dbReference>
<dbReference type="GO" id="GO:0035597">
    <property type="term" value="F:N6-isopentenyladenosine methylthiotransferase activity"/>
    <property type="evidence" value="ECO:0007669"/>
    <property type="project" value="TreeGrafter"/>
</dbReference>
<dbReference type="CDD" id="cd01335">
    <property type="entry name" value="Radical_SAM"/>
    <property type="match status" value="1"/>
</dbReference>
<dbReference type="FunFam" id="3.40.50.12160:FF:000003">
    <property type="entry name" value="CDK5 regulatory subunit-associated protein 1"/>
    <property type="match status" value="1"/>
</dbReference>
<dbReference type="FunFam" id="3.80.30.20:FF:000001">
    <property type="entry name" value="tRNA-2-methylthio-N(6)-dimethylallyladenosine synthase 2"/>
    <property type="match status" value="1"/>
</dbReference>
<dbReference type="Gene3D" id="3.40.50.12160">
    <property type="entry name" value="Methylthiotransferase, N-terminal domain"/>
    <property type="match status" value="1"/>
</dbReference>
<dbReference type="Gene3D" id="3.80.30.20">
    <property type="entry name" value="tm_1862 like domain"/>
    <property type="match status" value="1"/>
</dbReference>
<dbReference type="HAMAP" id="MF_01864">
    <property type="entry name" value="tRNA_metthiotr_MiaB"/>
    <property type="match status" value="1"/>
</dbReference>
<dbReference type="InterPro" id="IPR006638">
    <property type="entry name" value="Elp3/MiaA/NifB-like_rSAM"/>
</dbReference>
<dbReference type="InterPro" id="IPR005839">
    <property type="entry name" value="Methylthiotransferase"/>
</dbReference>
<dbReference type="InterPro" id="IPR020612">
    <property type="entry name" value="Methylthiotransferase_CS"/>
</dbReference>
<dbReference type="InterPro" id="IPR013848">
    <property type="entry name" value="Methylthiotransferase_N"/>
</dbReference>
<dbReference type="InterPro" id="IPR038135">
    <property type="entry name" value="Methylthiotransferase_N_sf"/>
</dbReference>
<dbReference type="InterPro" id="IPR006463">
    <property type="entry name" value="MiaB_methiolase"/>
</dbReference>
<dbReference type="InterPro" id="IPR007197">
    <property type="entry name" value="rSAM"/>
</dbReference>
<dbReference type="InterPro" id="IPR023404">
    <property type="entry name" value="rSAM_horseshoe"/>
</dbReference>
<dbReference type="InterPro" id="IPR002792">
    <property type="entry name" value="TRAM_dom"/>
</dbReference>
<dbReference type="NCBIfam" id="TIGR01574">
    <property type="entry name" value="miaB-methiolase"/>
    <property type="match status" value="1"/>
</dbReference>
<dbReference type="NCBIfam" id="TIGR00089">
    <property type="entry name" value="MiaB/RimO family radical SAM methylthiotransferase"/>
    <property type="match status" value="1"/>
</dbReference>
<dbReference type="PANTHER" id="PTHR43020">
    <property type="entry name" value="CDK5 REGULATORY SUBUNIT-ASSOCIATED PROTEIN 1"/>
    <property type="match status" value="1"/>
</dbReference>
<dbReference type="PANTHER" id="PTHR43020:SF2">
    <property type="entry name" value="MITOCHONDRIAL TRNA METHYLTHIOTRANSFERASE CDK5RAP1"/>
    <property type="match status" value="1"/>
</dbReference>
<dbReference type="Pfam" id="PF04055">
    <property type="entry name" value="Radical_SAM"/>
    <property type="match status" value="1"/>
</dbReference>
<dbReference type="Pfam" id="PF01938">
    <property type="entry name" value="TRAM"/>
    <property type="match status" value="1"/>
</dbReference>
<dbReference type="Pfam" id="PF00919">
    <property type="entry name" value="UPF0004"/>
    <property type="match status" value="1"/>
</dbReference>
<dbReference type="SFLD" id="SFLDF00273">
    <property type="entry name" value="(dimethylallyl)adenosine_tRNA"/>
    <property type="match status" value="1"/>
</dbReference>
<dbReference type="SFLD" id="SFLDG01082">
    <property type="entry name" value="B12-binding_domain_containing"/>
    <property type="match status" value="1"/>
</dbReference>
<dbReference type="SFLD" id="SFLDF00413">
    <property type="entry name" value="CDK5RAP1"/>
    <property type="match status" value="1"/>
</dbReference>
<dbReference type="SFLD" id="SFLDS00029">
    <property type="entry name" value="Radical_SAM"/>
    <property type="match status" value="1"/>
</dbReference>
<dbReference type="SMART" id="SM00729">
    <property type="entry name" value="Elp3"/>
    <property type="match status" value="1"/>
</dbReference>
<dbReference type="SUPFAM" id="SSF102114">
    <property type="entry name" value="Radical SAM enzymes"/>
    <property type="match status" value="1"/>
</dbReference>
<dbReference type="PROSITE" id="PS51449">
    <property type="entry name" value="MTTASE_N"/>
    <property type="match status" value="1"/>
</dbReference>
<dbReference type="PROSITE" id="PS01278">
    <property type="entry name" value="MTTASE_RADICAL"/>
    <property type="match status" value="1"/>
</dbReference>
<dbReference type="PROSITE" id="PS51918">
    <property type="entry name" value="RADICAL_SAM"/>
    <property type="match status" value="1"/>
</dbReference>
<dbReference type="PROSITE" id="PS50926">
    <property type="entry name" value="TRAM"/>
    <property type="match status" value="1"/>
</dbReference>